<accession>C3MVG5</accession>
<proteinExistence type="inferred from homology"/>
<name>RRP42_SACI4</name>
<comment type="function">
    <text evidence="1">Non-catalytic component of the exosome, which is a complex involved in RNA degradation. Contributes to the structuring of the Rrp41 active site.</text>
</comment>
<comment type="subunit">
    <text evidence="1">Component of the archaeal exosome complex. Forms a hexameric ring-like arrangement composed of 3 Rrp41-Rrp42 heterodimers. The hexameric ring associates with a trimer of Rrp4 and/or Csl4 subunits.</text>
</comment>
<comment type="subcellular location">
    <subcellularLocation>
        <location evidence="1">Cytoplasm</location>
    </subcellularLocation>
</comment>
<comment type="similarity">
    <text evidence="1">Belongs to the RNase PH family. Rrp42 subfamily.</text>
</comment>
<sequence length="275" mass="30256">MSSTPSNQNIIPLIKKESIVSLFEKGTRQDGRKLTDYRPLSITLDYAKKADGSALVKLGTTMVLAGTKLEIDKPYEDTPNQGNLIVNVELLPLAYETFEPGPPDENAIELARVVDRSLRDSKALDLTKLVIEPGKSVWTVWLDVYVLDYGGNVLDACTLASVAALHNTKVYKVEQDSNGFRVNKNEVVGKLPLNHPVVTVSIAKVDKYLIVDPDLDEESIMDTKVSFSYTPDLKIVGIQKSGKGSMSLQDIDQAENTARLVAVKLLEELKKQLGI</sequence>
<reference key="1">
    <citation type="journal article" date="2009" name="Proc. Natl. Acad. Sci. U.S.A.">
        <title>Biogeography of the Sulfolobus islandicus pan-genome.</title>
        <authorList>
            <person name="Reno M.L."/>
            <person name="Held N.L."/>
            <person name="Fields C.J."/>
            <person name="Burke P.V."/>
            <person name="Whitaker R.J."/>
        </authorList>
    </citation>
    <scope>NUCLEOTIDE SEQUENCE [LARGE SCALE GENOMIC DNA]</scope>
    <source>
        <strain>M.14.25 / Kamchatka #1</strain>
    </source>
</reference>
<organism>
    <name type="scientific">Saccharolobus islandicus (strain M.14.25 / Kamchatka #1)</name>
    <name type="common">Sulfolobus islandicus</name>
    <dbReference type="NCBI Taxonomy" id="427317"/>
    <lineage>
        <taxon>Archaea</taxon>
        <taxon>Thermoproteota</taxon>
        <taxon>Thermoprotei</taxon>
        <taxon>Sulfolobales</taxon>
        <taxon>Sulfolobaceae</taxon>
        <taxon>Saccharolobus</taxon>
    </lineage>
</organism>
<feature type="chain" id="PRO_1000212292" description="Exosome complex component Rrp42">
    <location>
        <begin position="1"/>
        <end position="275"/>
    </location>
</feature>
<protein>
    <recommendedName>
        <fullName evidence="1">Exosome complex component Rrp42</fullName>
    </recommendedName>
</protein>
<dbReference type="EMBL" id="CP001400">
    <property type="protein sequence ID" value="ACP38160.1"/>
    <property type="molecule type" value="Genomic_DNA"/>
</dbReference>
<dbReference type="RefSeq" id="WP_012711405.1">
    <property type="nucleotide sequence ID" value="NC_012588.1"/>
</dbReference>
<dbReference type="SMR" id="C3MVG5"/>
<dbReference type="GeneID" id="84058768"/>
<dbReference type="KEGG" id="sia:M1425_1407"/>
<dbReference type="HOGENOM" id="CLU_038194_0_0_2"/>
<dbReference type="Proteomes" id="UP000001350">
    <property type="component" value="Chromosome"/>
</dbReference>
<dbReference type="GO" id="GO:0000177">
    <property type="term" value="C:cytoplasmic exosome (RNase complex)"/>
    <property type="evidence" value="ECO:0007669"/>
    <property type="project" value="TreeGrafter"/>
</dbReference>
<dbReference type="GO" id="GO:0035925">
    <property type="term" value="F:mRNA 3'-UTR AU-rich region binding"/>
    <property type="evidence" value="ECO:0007669"/>
    <property type="project" value="TreeGrafter"/>
</dbReference>
<dbReference type="GO" id="GO:0016075">
    <property type="term" value="P:rRNA catabolic process"/>
    <property type="evidence" value="ECO:0007669"/>
    <property type="project" value="TreeGrafter"/>
</dbReference>
<dbReference type="CDD" id="cd11365">
    <property type="entry name" value="RNase_PH_archRRP42"/>
    <property type="match status" value="1"/>
</dbReference>
<dbReference type="FunFam" id="3.30.230.70:FF:000017">
    <property type="entry name" value="Exosome complex component Rrp42"/>
    <property type="match status" value="1"/>
</dbReference>
<dbReference type="Gene3D" id="3.30.230.70">
    <property type="entry name" value="GHMP Kinase, N-terminal domain"/>
    <property type="match status" value="1"/>
</dbReference>
<dbReference type="HAMAP" id="MF_00622">
    <property type="entry name" value="Exosome_Rrp42"/>
    <property type="match status" value="1"/>
</dbReference>
<dbReference type="InterPro" id="IPR001247">
    <property type="entry name" value="ExoRNase_PH_dom1"/>
</dbReference>
<dbReference type="InterPro" id="IPR015847">
    <property type="entry name" value="ExoRNase_PH_dom2"/>
</dbReference>
<dbReference type="InterPro" id="IPR036345">
    <property type="entry name" value="ExoRNase_PH_dom2_sf"/>
</dbReference>
<dbReference type="InterPro" id="IPR050590">
    <property type="entry name" value="Exosome_comp_Rrp42_subfam"/>
</dbReference>
<dbReference type="InterPro" id="IPR027408">
    <property type="entry name" value="PNPase/RNase_PH_dom_sf"/>
</dbReference>
<dbReference type="InterPro" id="IPR020568">
    <property type="entry name" value="Ribosomal_Su5_D2-typ_SF"/>
</dbReference>
<dbReference type="InterPro" id="IPR020869">
    <property type="entry name" value="Rrp42_archaea"/>
</dbReference>
<dbReference type="NCBIfam" id="NF003282">
    <property type="entry name" value="PRK04282.1-1"/>
    <property type="match status" value="1"/>
</dbReference>
<dbReference type="PANTHER" id="PTHR11097:SF8">
    <property type="entry name" value="EXOSOME COMPLEX COMPONENT RRP42"/>
    <property type="match status" value="1"/>
</dbReference>
<dbReference type="PANTHER" id="PTHR11097">
    <property type="entry name" value="EXOSOME COMPLEX EXONUCLEASE RIBOSOMAL RNA PROCESSING PROTEIN"/>
    <property type="match status" value="1"/>
</dbReference>
<dbReference type="Pfam" id="PF01138">
    <property type="entry name" value="RNase_PH"/>
    <property type="match status" value="1"/>
</dbReference>
<dbReference type="Pfam" id="PF03725">
    <property type="entry name" value="RNase_PH_C"/>
    <property type="match status" value="1"/>
</dbReference>
<dbReference type="SUPFAM" id="SSF55666">
    <property type="entry name" value="Ribonuclease PH domain 2-like"/>
    <property type="match status" value="1"/>
</dbReference>
<dbReference type="SUPFAM" id="SSF54211">
    <property type="entry name" value="Ribosomal protein S5 domain 2-like"/>
    <property type="match status" value="1"/>
</dbReference>
<keyword id="KW-0963">Cytoplasm</keyword>
<keyword id="KW-0271">Exosome</keyword>
<gene>
    <name evidence="1" type="primary">rrp42</name>
    <name type="ordered locus">M1425_1407</name>
</gene>
<evidence type="ECO:0000255" key="1">
    <source>
        <dbReference type="HAMAP-Rule" id="MF_00622"/>
    </source>
</evidence>